<proteinExistence type="inferred from homology"/>
<evidence type="ECO:0000250" key="1"/>
<evidence type="ECO:0000269" key="2">
    <source>
    </source>
</evidence>
<evidence type="ECO:0000305" key="3"/>
<protein>
    <recommendedName>
        <fullName>Centractin</fullName>
    </recommendedName>
    <alternativeName>
        <fullName>Actin-like protein</fullName>
    </alternativeName>
    <alternativeName>
        <fullName>Actin-related protein 1</fullName>
    </alternativeName>
</protein>
<keyword id="KW-0963">Cytoplasm</keyword>
<keyword id="KW-0206">Cytoskeleton</keyword>
<keyword id="KW-0243">Dynein</keyword>
<keyword id="KW-0493">Microtubule</keyword>
<keyword id="KW-1185">Reference proteome</keyword>
<dbReference type="EMBL" id="CU329671">
    <property type="protein sequence ID" value="CAB37443.1"/>
    <property type="molecule type" value="Genomic_DNA"/>
</dbReference>
<dbReference type="PIR" id="T39400">
    <property type="entry name" value="T39400"/>
</dbReference>
<dbReference type="RefSeq" id="NP_596704.1">
    <property type="nucleotide sequence ID" value="NM_001022628.2"/>
</dbReference>
<dbReference type="SMR" id="O94630"/>
<dbReference type="BioGRID" id="276231">
    <property type="interactions" value="8"/>
</dbReference>
<dbReference type="STRING" id="284812.O94630"/>
<dbReference type="PaxDb" id="4896-SPBC1347.12.1"/>
<dbReference type="EnsemblFungi" id="SPBC1347.12.1">
    <property type="protein sequence ID" value="SPBC1347.12.1:pep"/>
    <property type="gene ID" value="SPBC1347.12"/>
</dbReference>
<dbReference type="GeneID" id="2539676"/>
<dbReference type="KEGG" id="spo:2539676"/>
<dbReference type="PomBase" id="SPBC1347.12">
    <property type="gene designation" value="arp1"/>
</dbReference>
<dbReference type="VEuPathDB" id="FungiDB:SPBC1347.12"/>
<dbReference type="eggNOG" id="KOG0676">
    <property type="taxonomic scope" value="Eukaryota"/>
</dbReference>
<dbReference type="HOGENOM" id="CLU_027965_0_2_1"/>
<dbReference type="InParanoid" id="O94630"/>
<dbReference type="OMA" id="CIHSRFM"/>
<dbReference type="PhylomeDB" id="O94630"/>
<dbReference type="Reactome" id="R-SPO-6798695">
    <property type="pathway name" value="Neutrophil degranulation"/>
</dbReference>
<dbReference type="PRO" id="PR:O94630"/>
<dbReference type="Proteomes" id="UP000002485">
    <property type="component" value="Chromosome II"/>
</dbReference>
<dbReference type="GO" id="GO:0051285">
    <property type="term" value="C:cell cortex of cell tip"/>
    <property type="evidence" value="ECO:0000353"/>
    <property type="project" value="PomBase"/>
</dbReference>
<dbReference type="GO" id="GO:0005829">
    <property type="term" value="C:cytosol"/>
    <property type="evidence" value="ECO:0007005"/>
    <property type="project" value="PomBase"/>
</dbReference>
<dbReference type="GO" id="GO:0005869">
    <property type="term" value="C:dynactin complex"/>
    <property type="evidence" value="ECO:0000353"/>
    <property type="project" value="PomBase"/>
</dbReference>
<dbReference type="GO" id="GO:0030286">
    <property type="term" value="C:dynein complex"/>
    <property type="evidence" value="ECO:0007669"/>
    <property type="project" value="UniProtKB-KW"/>
</dbReference>
<dbReference type="GO" id="GO:0005874">
    <property type="term" value="C:microtubule"/>
    <property type="evidence" value="ECO:0007669"/>
    <property type="project" value="UniProtKB-KW"/>
</dbReference>
<dbReference type="GO" id="GO:0030989">
    <property type="term" value="P:dynein-driven meiotic oscillatory nuclear movement"/>
    <property type="evidence" value="ECO:0000315"/>
    <property type="project" value="PomBase"/>
</dbReference>
<dbReference type="CDD" id="cd10216">
    <property type="entry name" value="ASKHA_NBD_Arp1"/>
    <property type="match status" value="1"/>
</dbReference>
<dbReference type="FunFam" id="3.30.420.40:FF:000188">
    <property type="entry name" value="Actin like 6B"/>
    <property type="match status" value="1"/>
</dbReference>
<dbReference type="FunFam" id="3.90.640.10:FF:000007">
    <property type="entry name" value="Actin like 7B"/>
    <property type="match status" value="1"/>
</dbReference>
<dbReference type="Gene3D" id="3.30.420.40">
    <property type="match status" value="2"/>
</dbReference>
<dbReference type="Gene3D" id="3.90.640.10">
    <property type="entry name" value="Actin, Chain A, domain 4"/>
    <property type="match status" value="1"/>
</dbReference>
<dbReference type="InterPro" id="IPR004000">
    <property type="entry name" value="Actin"/>
</dbReference>
<dbReference type="InterPro" id="IPR043129">
    <property type="entry name" value="ATPase_NBD"/>
</dbReference>
<dbReference type="PANTHER" id="PTHR11937">
    <property type="entry name" value="ACTIN"/>
    <property type="match status" value="1"/>
</dbReference>
<dbReference type="Pfam" id="PF00022">
    <property type="entry name" value="Actin"/>
    <property type="match status" value="1"/>
</dbReference>
<dbReference type="PRINTS" id="PR00190">
    <property type="entry name" value="ACTIN"/>
</dbReference>
<dbReference type="SMART" id="SM00268">
    <property type="entry name" value="ACTIN"/>
    <property type="match status" value="1"/>
</dbReference>
<dbReference type="SUPFAM" id="SSF53067">
    <property type="entry name" value="Actin-like ATPase domain"/>
    <property type="match status" value="2"/>
</dbReference>
<feature type="chain" id="PRO_0000310306" description="Centractin">
    <location>
        <begin position="1"/>
        <end position="379"/>
    </location>
</feature>
<gene>
    <name type="primary">arp1</name>
    <name type="ORF">SPBC1347.12</name>
</gene>
<accession>O94630</accession>
<name>ARP1_SCHPO</name>
<sequence>MTVTEIFDNQPICIDNGSGFIKAGFAGDDIPKCLFPTCVGRIKHERVMPSSIQKDMFVGSEAQNLRGLLKIQRPIERGIIQNWSDMEEIWSYIYSDQQLNTLPEEHPLLLTEPPLANIRNKEKIAEYFYETLNVPALSFSLQPVLALYASARTTGIVLECGDGLTHSVPIYDGFSIPSAIQQEEIGGRDVTDYLQLQLRKSGHELVSSAEKEIVREIKEKCCYVASDFRSEIESWTEHKPQIHTYQLPDNQTITLGTECFSAPEVLFNPEMMGSEASGLHIQLFKSILLSDIDLRSTLYSNIVLSGGSTLLRGFGERFISELRAISGKKNQVKIYASPERMHNAWLGGSILASLSTFRRLLITSEEYKNDQNVIFRRRF</sequence>
<organism>
    <name type="scientific">Schizosaccharomyces pombe (strain 972 / ATCC 24843)</name>
    <name type="common">Fission yeast</name>
    <dbReference type="NCBI Taxonomy" id="284812"/>
    <lineage>
        <taxon>Eukaryota</taxon>
        <taxon>Fungi</taxon>
        <taxon>Dikarya</taxon>
        <taxon>Ascomycota</taxon>
        <taxon>Taphrinomycotina</taxon>
        <taxon>Schizosaccharomycetes</taxon>
        <taxon>Schizosaccharomycetales</taxon>
        <taxon>Schizosaccharomycetaceae</taxon>
        <taxon>Schizosaccharomyces</taxon>
    </lineage>
</organism>
<reference key="1">
    <citation type="journal article" date="2002" name="Nature">
        <title>The genome sequence of Schizosaccharomyces pombe.</title>
        <authorList>
            <person name="Wood V."/>
            <person name="Gwilliam R."/>
            <person name="Rajandream M.A."/>
            <person name="Lyne M.H."/>
            <person name="Lyne R."/>
            <person name="Stewart A."/>
            <person name="Sgouros J.G."/>
            <person name="Peat N."/>
            <person name="Hayles J."/>
            <person name="Baker S.G."/>
            <person name="Basham D."/>
            <person name="Bowman S."/>
            <person name="Brooks K."/>
            <person name="Brown D."/>
            <person name="Brown S."/>
            <person name="Chillingworth T."/>
            <person name="Churcher C.M."/>
            <person name="Collins M."/>
            <person name="Connor R."/>
            <person name="Cronin A."/>
            <person name="Davis P."/>
            <person name="Feltwell T."/>
            <person name="Fraser A."/>
            <person name="Gentles S."/>
            <person name="Goble A."/>
            <person name="Hamlin N."/>
            <person name="Harris D.E."/>
            <person name="Hidalgo J."/>
            <person name="Hodgson G."/>
            <person name="Holroyd S."/>
            <person name="Hornsby T."/>
            <person name="Howarth S."/>
            <person name="Huckle E.J."/>
            <person name="Hunt S."/>
            <person name="Jagels K."/>
            <person name="James K.D."/>
            <person name="Jones L."/>
            <person name="Jones M."/>
            <person name="Leather S."/>
            <person name="McDonald S."/>
            <person name="McLean J."/>
            <person name="Mooney P."/>
            <person name="Moule S."/>
            <person name="Mungall K.L."/>
            <person name="Murphy L.D."/>
            <person name="Niblett D."/>
            <person name="Odell C."/>
            <person name="Oliver K."/>
            <person name="O'Neil S."/>
            <person name="Pearson D."/>
            <person name="Quail M.A."/>
            <person name="Rabbinowitsch E."/>
            <person name="Rutherford K.M."/>
            <person name="Rutter S."/>
            <person name="Saunders D."/>
            <person name="Seeger K."/>
            <person name="Sharp S."/>
            <person name="Skelton J."/>
            <person name="Simmonds M.N."/>
            <person name="Squares R."/>
            <person name="Squares S."/>
            <person name="Stevens K."/>
            <person name="Taylor K."/>
            <person name="Taylor R.G."/>
            <person name="Tivey A."/>
            <person name="Walsh S.V."/>
            <person name="Warren T."/>
            <person name="Whitehead S."/>
            <person name="Woodward J.R."/>
            <person name="Volckaert G."/>
            <person name="Aert R."/>
            <person name="Robben J."/>
            <person name="Grymonprez B."/>
            <person name="Weltjens I."/>
            <person name="Vanstreels E."/>
            <person name="Rieger M."/>
            <person name="Schaefer M."/>
            <person name="Mueller-Auer S."/>
            <person name="Gabel C."/>
            <person name="Fuchs M."/>
            <person name="Duesterhoeft A."/>
            <person name="Fritzc C."/>
            <person name="Holzer E."/>
            <person name="Moestl D."/>
            <person name="Hilbert H."/>
            <person name="Borzym K."/>
            <person name="Langer I."/>
            <person name="Beck A."/>
            <person name="Lehrach H."/>
            <person name="Reinhardt R."/>
            <person name="Pohl T.M."/>
            <person name="Eger P."/>
            <person name="Zimmermann W."/>
            <person name="Wedler H."/>
            <person name="Wambutt R."/>
            <person name="Purnelle B."/>
            <person name="Goffeau A."/>
            <person name="Cadieu E."/>
            <person name="Dreano S."/>
            <person name="Gloux S."/>
            <person name="Lelaure V."/>
            <person name="Mottier S."/>
            <person name="Galibert F."/>
            <person name="Aves S.J."/>
            <person name="Xiang Z."/>
            <person name="Hunt C."/>
            <person name="Moore K."/>
            <person name="Hurst S.M."/>
            <person name="Lucas M."/>
            <person name="Rochet M."/>
            <person name="Gaillardin C."/>
            <person name="Tallada V.A."/>
            <person name="Garzon A."/>
            <person name="Thode G."/>
            <person name="Daga R.R."/>
            <person name="Cruzado L."/>
            <person name="Jimenez J."/>
            <person name="Sanchez M."/>
            <person name="del Rey F."/>
            <person name="Benito J."/>
            <person name="Dominguez A."/>
            <person name="Revuelta J.L."/>
            <person name="Moreno S."/>
            <person name="Armstrong J."/>
            <person name="Forsburg S.L."/>
            <person name="Cerutti L."/>
            <person name="Lowe T."/>
            <person name="McCombie W.R."/>
            <person name="Paulsen I."/>
            <person name="Potashkin J."/>
            <person name="Shpakovski G.V."/>
            <person name="Ussery D."/>
            <person name="Barrell B.G."/>
            <person name="Nurse P."/>
        </authorList>
    </citation>
    <scope>NUCLEOTIDE SEQUENCE [LARGE SCALE GENOMIC DNA]</scope>
    <source>
        <strain>972 / ATCC 24843</strain>
    </source>
</reference>
<reference key="2">
    <citation type="journal article" date="2006" name="Nat. Biotechnol.">
        <title>ORFeome cloning and global analysis of protein localization in the fission yeast Schizosaccharomyces pombe.</title>
        <authorList>
            <person name="Matsuyama A."/>
            <person name="Arai R."/>
            <person name="Yashiroda Y."/>
            <person name="Shirai A."/>
            <person name="Kamata A."/>
            <person name="Sekido S."/>
            <person name="Kobayashi Y."/>
            <person name="Hashimoto A."/>
            <person name="Hamamoto M."/>
            <person name="Hiraoka Y."/>
            <person name="Horinouchi S."/>
            <person name="Yoshida M."/>
        </authorList>
    </citation>
    <scope>SUBCELLULAR LOCATION [LARGE SCALE ANALYSIS]</scope>
</reference>
<comment type="function">
    <text evidence="1">Core component of the dynactin complex which assists cytoplasmic dynein by increasing its processivity and by regulation of its cargo binding. The dynactin complex is required for the spindle translocation late in anaphase and is involved in a cell wall synthesis checkpoint. Arp1 forms the backbone filament of the dynactin rod structure and serves as the scaffold for the remaining subunits. Required for proper orientation of the mitotic spindle (By similarity).</text>
</comment>
<comment type="subunit">
    <text evidence="1">Self-associates to form an actin-like filament of 8-10 monomers. Component of the dynactin complex.</text>
</comment>
<comment type="subcellular location">
    <subcellularLocation>
        <location evidence="2">Cytoplasm</location>
        <location evidence="2">Cytoskeleton</location>
    </subcellularLocation>
</comment>
<comment type="similarity">
    <text evidence="3">Belongs to the actin family. ARP1 subfamily.</text>
</comment>